<organism>
    <name type="scientific">Neisseria meningitidis serogroup B (strain ATCC BAA-335 / MC58)</name>
    <dbReference type="NCBI Taxonomy" id="122586"/>
    <lineage>
        <taxon>Bacteria</taxon>
        <taxon>Pseudomonadati</taxon>
        <taxon>Pseudomonadota</taxon>
        <taxon>Betaproteobacteria</taxon>
        <taxon>Neisseriales</taxon>
        <taxon>Neisseriaceae</taxon>
        <taxon>Neisseria</taxon>
    </lineage>
</organism>
<comment type="function">
    <text evidence="1">Modifies, by uridylylation and deuridylylation, the PII regulatory proteins (GlnB and homologs), in response to the nitrogen status of the cell that GlnD senses through the glutamine level. Under low glutamine levels, catalyzes the conversion of the PII proteins and UTP to PII-UMP and PPi, while under higher glutamine levels, GlnD hydrolyzes PII-UMP to PII and UMP (deuridylylation). Thus, controls uridylylation state and activity of the PII proteins, and plays an important role in the regulation of nitrogen assimilation and metabolism.</text>
</comment>
<comment type="catalytic activity">
    <reaction evidence="1">
        <text>[protein-PII]-L-tyrosine + UTP = [protein-PII]-uridylyl-L-tyrosine + diphosphate</text>
        <dbReference type="Rhea" id="RHEA:13673"/>
        <dbReference type="Rhea" id="RHEA-COMP:12147"/>
        <dbReference type="Rhea" id="RHEA-COMP:12148"/>
        <dbReference type="ChEBI" id="CHEBI:33019"/>
        <dbReference type="ChEBI" id="CHEBI:46398"/>
        <dbReference type="ChEBI" id="CHEBI:46858"/>
        <dbReference type="ChEBI" id="CHEBI:90602"/>
        <dbReference type="EC" id="2.7.7.59"/>
    </reaction>
</comment>
<comment type="catalytic activity">
    <reaction evidence="1">
        <text>[protein-PII]-uridylyl-L-tyrosine + H2O = [protein-PII]-L-tyrosine + UMP + H(+)</text>
        <dbReference type="Rhea" id="RHEA:48600"/>
        <dbReference type="Rhea" id="RHEA-COMP:12147"/>
        <dbReference type="Rhea" id="RHEA-COMP:12148"/>
        <dbReference type="ChEBI" id="CHEBI:15377"/>
        <dbReference type="ChEBI" id="CHEBI:15378"/>
        <dbReference type="ChEBI" id="CHEBI:46858"/>
        <dbReference type="ChEBI" id="CHEBI:57865"/>
        <dbReference type="ChEBI" id="CHEBI:90602"/>
    </reaction>
</comment>
<comment type="cofactor">
    <cofactor evidence="1">
        <name>Mg(2+)</name>
        <dbReference type="ChEBI" id="CHEBI:18420"/>
    </cofactor>
</comment>
<comment type="activity regulation">
    <text evidence="1">Uridylyltransferase (UTase) activity is inhibited by glutamine, while glutamine activates uridylyl-removing (UR) activity.</text>
</comment>
<comment type="domain">
    <text evidence="1">Has four distinct domains: an N-terminal nucleotidyltransferase (NT) domain responsible for UTase activity, a central HD domain that encodes UR activity, and two C-terminal ACT domains that seem to have a role in glutamine sensing.</text>
</comment>
<comment type="similarity">
    <text evidence="1">Belongs to the GlnD family.</text>
</comment>
<keyword id="KW-0378">Hydrolase</keyword>
<keyword id="KW-0460">Magnesium</keyword>
<keyword id="KW-0511">Multifunctional enzyme</keyword>
<keyword id="KW-0548">Nucleotidyltransferase</keyword>
<keyword id="KW-1185">Reference proteome</keyword>
<keyword id="KW-0677">Repeat</keyword>
<keyword id="KW-0808">Transferase</keyword>
<gene>
    <name evidence="1" type="primary">glnD</name>
    <name type="ordered locus">NMB1203</name>
</gene>
<accession>Q9JZB4</accession>
<protein>
    <recommendedName>
        <fullName evidence="1">Bifunctional uridylyltransferase/uridylyl-removing enzyme</fullName>
        <shortName evidence="1">UTase/UR</shortName>
    </recommendedName>
    <alternativeName>
        <fullName evidence="1">Bifunctional [protein-PII] modification enzyme</fullName>
    </alternativeName>
    <alternativeName>
        <fullName evidence="1">Bifunctional nitrogen sensor protein</fullName>
    </alternativeName>
    <domain>
        <recommendedName>
            <fullName evidence="1">[Protein-PII] uridylyltransferase</fullName>
            <shortName evidence="1">PII uridylyltransferase</shortName>
            <shortName evidence="1">UTase</shortName>
            <ecNumber evidence="1">2.7.7.59</ecNumber>
        </recommendedName>
    </domain>
    <domain>
        <recommendedName>
            <fullName evidence="1">[Protein-PII]-UMP uridylyl-removing enzyme</fullName>
            <shortName evidence="1">UR</shortName>
            <ecNumber evidence="1">3.1.4.-</ecNumber>
        </recommendedName>
    </domain>
</protein>
<reference key="1">
    <citation type="journal article" date="2000" name="Science">
        <title>Complete genome sequence of Neisseria meningitidis serogroup B strain MC58.</title>
        <authorList>
            <person name="Tettelin H."/>
            <person name="Saunders N.J."/>
            <person name="Heidelberg J.F."/>
            <person name="Jeffries A.C."/>
            <person name="Nelson K.E."/>
            <person name="Eisen J.A."/>
            <person name="Ketchum K.A."/>
            <person name="Hood D.W."/>
            <person name="Peden J.F."/>
            <person name="Dodson R.J."/>
            <person name="Nelson W.C."/>
            <person name="Gwinn M.L."/>
            <person name="DeBoy R.T."/>
            <person name="Peterson J.D."/>
            <person name="Hickey E.K."/>
            <person name="Haft D.H."/>
            <person name="Salzberg S.L."/>
            <person name="White O."/>
            <person name="Fleischmann R.D."/>
            <person name="Dougherty B.A."/>
            <person name="Mason T.M."/>
            <person name="Ciecko A."/>
            <person name="Parksey D.S."/>
            <person name="Blair E."/>
            <person name="Cittone H."/>
            <person name="Clark E.B."/>
            <person name="Cotton M.D."/>
            <person name="Utterback T.R."/>
            <person name="Khouri H.M."/>
            <person name="Qin H."/>
            <person name="Vamathevan J.J."/>
            <person name="Gill J."/>
            <person name="Scarlato V."/>
            <person name="Masignani V."/>
            <person name="Pizza M."/>
            <person name="Grandi G."/>
            <person name="Sun L."/>
            <person name="Smith H.O."/>
            <person name="Fraser C.M."/>
            <person name="Moxon E.R."/>
            <person name="Rappuoli R."/>
            <person name="Venter J.C."/>
        </authorList>
    </citation>
    <scope>NUCLEOTIDE SEQUENCE [LARGE SCALE GENOMIC DNA]</scope>
    <source>
        <strain>ATCC BAA-335 / MC58</strain>
    </source>
</reference>
<feature type="chain" id="PRO_0000192748" description="Bifunctional uridylyltransferase/uridylyl-removing enzyme">
    <location>
        <begin position="1"/>
        <end position="852"/>
    </location>
</feature>
<feature type="domain" description="HD" evidence="2">
    <location>
        <begin position="436"/>
        <end position="558"/>
    </location>
</feature>
<feature type="domain" description="ACT 1" evidence="1">
    <location>
        <begin position="673"/>
        <end position="757"/>
    </location>
</feature>
<feature type="domain" description="ACT 2" evidence="1">
    <location>
        <begin position="785"/>
        <end position="852"/>
    </location>
</feature>
<feature type="region of interest" description="Uridylyltransferase">
    <location>
        <begin position="1"/>
        <end position="318"/>
    </location>
</feature>
<feature type="region of interest" description="Uridylyl-removing">
    <location>
        <begin position="319"/>
        <end position="672"/>
    </location>
</feature>
<evidence type="ECO:0000255" key="1">
    <source>
        <dbReference type="HAMAP-Rule" id="MF_00277"/>
    </source>
</evidence>
<evidence type="ECO:0000255" key="2">
    <source>
        <dbReference type="PROSITE-ProRule" id="PRU01175"/>
    </source>
</evidence>
<proteinExistence type="inferred from homology"/>
<name>GLND_NEIMB</name>
<sequence>MPANLSSALETFKQQRDAAEAHYLKANRVSVFFREYTAAVETLLAALWAEYFQNSALCLMAVGGFGRGELYPCSDVDLAVVSPAPLSDGIQEQIARFVQTLWDCKLMPSVKSGSVDELCESVRNDITGDTAFLEARFLFGNRQTVDKLAEKMNAQRNVAAFVEAKLVEMEHRHAKSQGSGAVLEPNIKSCPGGLRDIHTLLWIAKAQGLATDLPDLLKQRILTRAEAGMLSHGYRRLAHIRIHLHLNAKRAEDRLLFDLQPQVAESMGYEGLNLRRQSEELMRVFYRAIKTVKQLGGILTPMLQSRVSSTPLRVTLRIDDDYIQVNNQIAARHTDIFFRRPEHIFKIVEIMQQRNDITALEPQTLRAWWGATRKINRSFYQNPENRRRFAGFFRNGNGLTQTLRFLNLYGVLGRYLPAWEKIIGLLQHDLFHIYPVDDHILTVVRNVRRLALDMHSHELPYASALMQSFEKQDILYLAAFFHDIAKGRGGDHAIQGIADARQFAADHFLTGEESDLLAWLVENHLLMSAVAQKEDIQDPSVLDAFCKRVQTHERLSALYLLTISDIRGTNPKLWNAWRASLLESLFHAAGRYLTGNGGNPHTLFGRRRQEAADLLTRAAVPEKQQKKLWNALGSAYFARHQSREILWHAANLVHDFETPIVRSRILPKSDSFQVMVFMPNGPRLFARLCRIFSRHGFDILAARAFITEHDYILDTFIVQIPSQHAPEDYPDIQSALEAELNSFIHGHTVAETQSRSRRISRRSRYMPIAPSITITPEEDYPDWYSVEITAVNRPFLLADMAEVFFAHNVSLRYAKISTLDERAEDSFTVFSPDLKNPKIQSSLKQTLLEQLS</sequence>
<dbReference type="EC" id="2.7.7.59" evidence="1"/>
<dbReference type="EC" id="3.1.4.-" evidence="1"/>
<dbReference type="EMBL" id="AE002098">
    <property type="protein sequence ID" value="AAF41585.1"/>
    <property type="molecule type" value="Genomic_DNA"/>
</dbReference>
<dbReference type="PIR" id="B81110">
    <property type="entry name" value="B81110"/>
</dbReference>
<dbReference type="RefSeq" id="NP_274228.1">
    <property type="nucleotide sequence ID" value="NC_003112.2"/>
</dbReference>
<dbReference type="RefSeq" id="WP_002225207.1">
    <property type="nucleotide sequence ID" value="NC_003112.2"/>
</dbReference>
<dbReference type="SMR" id="Q9JZB4"/>
<dbReference type="FunCoup" id="Q9JZB4">
    <property type="interactions" value="181"/>
</dbReference>
<dbReference type="STRING" id="122586.NMB1203"/>
<dbReference type="PaxDb" id="122586-NMB1203"/>
<dbReference type="KEGG" id="nme:NMB1203"/>
<dbReference type="PATRIC" id="fig|122586.8.peg.1510"/>
<dbReference type="HOGENOM" id="CLU_012833_0_0_4"/>
<dbReference type="InParanoid" id="Q9JZB4"/>
<dbReference type="OrthoDB" id="9758038at2"/>
<dbReference type="Proteomes" id="UP000000425">
    <property type="component" value="Chromosome"/>
</dbReference>
<dbReference type="GO" id="GO:0008773">
    <property type="term" value="F:[protein-PII] uridylyltransferase activity"/>
    <property type="evidence" value="ECO:0000318"/>
    <property type="project" value="GO_Central"/>
</dbReference>
<dbReference type="GO" id="GO:0008081">
    <property type="term" value="F:phosphoric diester hydrolase activity"/>
    <property type="evidence" value="ECO:0007669"/>
    <property type="project" value="UniProtKB-UniRule"/>
</dbReference>
<dbReference type="GO" id="GO:0006808">
    <property type="term" value="P:regulation of nitrogen utilization"/>
    <property type="evidence" value="ECO:0007669"/>
    <property type="project" value="UniProtKB-UniRule"/>
</dbReference>
<dbReference type="CDD" id="cd04899">
    <property type="entry name" value="ACT_ACR-UUR-like_2"/>
    <property type="match status" value="1"/>
</dbReference>
<dbReference type="CDD" id="cd04900">
    <property type="entry name" value="ACT_UUR-like_1"/>
    <property type="match status" value="1"/>
</dbReference>
<dbReference type="CDD" id="cd00077">
    <property type="entry name" value="HDc"/>
    <property type="match status" value="1"/>
</dbReference>
<dbReference type="CDD" id="cd05401">
    <property type="entry name" value="NT_GlnE_GlnD_like"/>
    <property type="match status" value="1"/>
</dbReference>
<dbReference type="Gene3D" id="1.10.3210.10">
    <property type="entry name" value="Hypothetical protein af1432"/>
    <property type="match status" value="1"/>
</dbReference>
<dbReference type="HAMAP" id="MF_00277">
    <property type="entry name" value="PII_uridylyl_transf"/>
    <property type="match status" value="1"/>
</dbReference>
<dbReference type="InterPro" id="IPR045865">
    <property type="entry name" value="ACT-like_dom_sf"/>
</dbReference>
<dbReference type="InterPro" id="IPR002912">
    <property type="entry name" value="ACT_dom"/>
</dbReference>
<dbReference type="InterPro" id="IPR003607">
    <property type="entry name" value="HD/PDEase_dom"/>
</dbReference>
<dbReference type="InterPro" id="IPR006674">
    <property type="entry name" value="HD_domain"/>
</dbReference>
<dbReference type="InterPro" id="IPR043519">
    <property type="entry name" value="NT_sf"/>
</dbReference>
<dbReference type="InterPro" id="IPR013546">
    <property type="entry name" value="PII_UdlTrfase/GS_AdlTrfase"/>
</dbReference>
<dbReference type="InterPro" id="IPR010043">
    <property type="entry name" value="UTase/UR"/>
</dbReference>
<dbReference type="NCBIfam" id="TIGR01693">
    <property type="entry name" value="UTase_glnD"/>
    <property type="match status" value="1"/>
</dbReference>
<dbReference type="PANTHER" id="PTHR47320">
    <property type="entry name" value="BIFUNCTIONAL URIDYLYLTRANSFERASE/URIDYLYL-REMOVING ENZYME"/>
    <property type="match status" value="1"/>
</dbReference>
<dbReference type="PANTHER" id="PTHR47320:SF1">
    <property type="entry name" value="BIFUNCTIONAL URIDYLYLTRANSFERASE_URIDYLYL-REMOVING ENZYME"/>
    <property type="match status" value="1"/>
</dbReference>
<dbReference type="Pfam" id="PF08335">
    <property type="entry name" value="GlnD_UR_UTase"/>
    <property type="match status" value="1"/>
</dbReference>
<dbReference type="Pfam" id="PF01966">
    <property type="entry name" value="HD"/>
    <property type="match status" value="1"/>
</dbReference>
<dbReference type="PIRSF" id="PIRSF006288">
    <property type="entry name" value="PII_uridyltransf"/>
    <property type="match status" value="1"/>
</dbReference>
<dbReference type="SMART" id="SM00471">
    <property type="entry name" value="HDc"/>
    <property type="match status" value="1"/>
</dbReference>
<dbReference type="SUPFAM" id="SSF55021">
    <property type="entry name" value="ACT-like"/>
    <property type="match status" value="2"/>
</dbReference>
<dbReference type="SUPFAM" id="SSF109604">
    <property type="entry name" value="HD-domain/PDEase-like"/>
    <property type="match status" value="1"/>
</dbReference>
<dbReference type="SUPFAM" id="SSF81301">
    <property type="entry name" value="Nucleotidyltransferase"/>
    <property type="match status" value="1"/>
</dbReference>
<dbReference type="SUPFAM" id="SSF81593">
    <property type="entry name" value="Nucleotidyltransferase substrate binding subunit/domain"/>
    <property type="match status" value="1"/>
</dbReference>
<dbReference type="PROSITE" id="PS51671">
    <property type="entry name" value="ACT"/>
    <property type="match status" value="2"/>
</dbReference>
<dbReference type="PROSITE" id="PS51831">
    <property type="entry name" value="HD"/>
    <property type="match status" value="1"/>
</dbReference>